<sequence length="469" mass="51888">MNPNQKIITIGSVSLTIATACSLMQIAILATTVTLHFKQHECDSPASNQVMPCEPIIIERNITEIVYLNNTTIEKEICPEVVEYRNWSKPQCQITGFAPFSKDNSIRLSAGGDIWVTREPYVSCDPGKCYQFALGQGTTLDNKHSNGTIHDRIPHRTLLMNELGVPFHLGTKQVCVAWSSSSCHDGKAWLHVCVTGDDRNATASFIYDGRLVDSIGSWSQNILRTQESECVCINGTCTVVMTDGSASGRADTRILFIKEGKIVHISPLSGSAQHIEECSCYPRYPDVRCICRDNWKGSNRPVIDINMEDYSIDSSYVCSGLVGDTPRNDDSSSNSNCRDPNNERGNPGVKGWAFDNGDDVWMGRTISKDSRSGYETFKVIGGWSTPNSKSQVNRQVIVDNNNWSGYSGIFSVEGKSCINRCFYVELIRGRPQETRVWWTSNSIVVFCGTSGTYGTGSWPDGANINFMPI</sequence>
<organismHost>
    <name type="scientific">Aves</name>
    <dbReference type="NCBI Taxonomy" id="8782"/>
</organismHost>
<organismHost>
    <name type="scientific">Homo sapiens</name>
    <name type="common">Human</name>
    <dbReference type="NCBI Taxonomy" id="9606"/>
</organismHost>
<accession>Q67212</accession>
<accession>Q67213</accession>
<comment type="function">
    <text evidence="1">Catalyzes the removal of terminal sialic acid residues from viral and cellular glycoconjugates. Cleaves off the terminal sialic acids on the glycosylated HA during virus budding to facilitate virus release. Additionally helps virus spread through the circulation by further removing sialic acids from the cell surface. These cleavages prevent self-aggregation and ensure the efficient spread of the progeny virus from cell to cell. Otherwise, infection would be limited to one round of replication. Described as a receptor-destroying enzyme because it cleaves a terminal sialic acid from the cellular receptors. May facilitate viral invasion of the upper airways by cleaving the sialic acid moieties on the mucin of the airway epithelial cells. Likely to plays a role in the budding process through its association with lipid rafts during intracellular transport. May additionally display a raft-association independent effect on budding. Plays a role in the determination of host range restriction on replication and virulence. Sialidase activity in late endosome/lysosome traffic seems to enhance virus replication.</text>
</comment>
<comment type="catalytic activity">
    <reaction evidence="1">
        <text>Hydrolysis of alpha-(2-&gt;3)-, alpha-(2-&gt;6)-, alpha-(2-&gt;8)- glycosidic linkages of terminal sialic acid residues in oligosaccharides, glycoproteins, glycolipids, colominic acid and synthetic substrates.</text>
        <dbReference type="EC" id="3.2.1.18"/>
    </reaction>
</comment>
<comment type="cofactor">
    <cofactor evidence="1">
        <name>Ca(2+)</name>
        <dbReference type="ChEBI" id="CHEBI:29108"/>
    </cofactor>
</comment>
<comment type="activity regulation">
    <text evidence="1">Inhibited by the neuraminidase inhibitors zanamivir (Relenza) and oseltamivir (Tamiflu). These drugs interfere with the release of progeny virus from infected cells and are effective against all influenza strains. Resistance to neuraminidase inhibitors is quite rare.</text>
</comment>
<comment type="subunit">
    <text evidence="1">Homotetramer.</text>
</comment>
<comment type="subcellular location">
    <subcellularLocation>
        <location evidence="1">Virion membrane</location>
    </subcellularLocation>
    <subcellularLocation>
        <location evidence="1">Host apical cell membrane</location>
        <topology evidence="1">Single-pass type II membrane protein</topology>
    </subcellularLocation>
    <text evidence="1">Preferentially accumulates at the apical plasma membrane in infected polarized epithelial cells, which is the virus assembly site. Uses lipid rafts for cell surface transport and apical sorting. In the virion, forms a mushroom-shaped spike on the surface of the membrane.</text>
</comment>
<comment type="domain">
    <text evidence="1">Intact N-terminus is essential for virion morphogenesis. Possesses two apical sorting signals, one in the ectodomain, which is likely to be a glycan, and the other in the transmembrane domain. The transmembrane domain also plays a role in lipid raft association.</text>
</comment>
<comment type="PTM">
    <text evidence="1">N-glycosylated.</text>
</comment>
<comment type="miscellaneous">
    <text>The influenza A genome consist of 8 RNA segments. Genetic variation of hemagglutinin and/or neuraminidase genes results in the emergence of new influenza strains. The mechanism of variation can be the result of point mutations or the result of genetic reassortment between segments of two different strains.</text>
</comment>
<comment type="similarity">
    <text evidence="1">Belongs to the glycosyl hydrolase 34 family.</text>
</comment>
<keyword id="KW-0106">Calcium</keyword>
<keyword id="KW-1015">Disulfide bond</keyword>
<keyword id="KW-0325">Glycoprotein</keyword>
<keyword id="KW-0326">Glycosidase</keyword>
<keyword id="KW-1032">Host cell membrane</keyword>
<keyword id="KW-1043">Host membrane</keyword>
<keyword id="KW-0378">Hydrolase</keyword>
<keyword id="KW-0472">Membrane</keyword>
<keyword id="KW-0479">Metal-binding</keyword>
<keyword id="KW-0735">Signal-anchor</keyword>
<keyword id="KW-0812">Transmembrane</keyword>
<keyword id="KW-1133">Transmembrane helix</keyword>
<keyword id="KW-0946">Virion</keyword>
<proteinExistence type="inferred from homology"/>
<organism>
    <name type="scientific">Influenza A virus (strain A/Leningrad/134/1957 H2N2)</name>
    <dbReference type="NCBI Taxonomy" id="387163"/>
    <lineage>
        <taxon>Viruses</taxon>
        <taxon>Riboviria</taxon>
        <taxon>Orthornavirae</taxon>
        <taxon>Negarnaviricota</taxon>
        <taxon>Polyploviricotina</taxon>
        <taxon>Insthoviricetes</taxon>
        <taxon>Articulavirales</taxon>
        <taxon>Orthomyxoviridae</taxon>
        <taxon>Alphainfluenzavirus</taxon>
        <taxon>Alphainfluenzavirus influenzae</taxon>
        <taxon>Influenza A virus</taxon>
    </lineage>
</organism>
<evidence type="ECO:0000255" key="1">
    <source>
        <dbReference type="HAMAP-Rule" id="MF_04071"/>
    </source>
</evidence>
<evidence type="ECO:0000256" key="2">
    <source>
        <dbReference type="SAM" id="MobiDB-lite"/>
    </source>
</evidence>
<dbReference type="EC" id="3.2.1.18" evidence="1"/>
<dbReference type="EMBL" id="L37329">
    <property type="protein sequence ID" value="AAA96709.2"/>
    <property type="molecule type" value="Genomic_RNA"/>
</dbReference>
<dbReference type="SMR" id="Q67212"/>
<dbReference type="GlyCosmos" id="Q67212">
    <property type="glycosylation" value="8 sites, No reported glycans"/>
</dbReference>
<dbReference type="GO" id="GO:0020002">
    <property type="term" value="C:host cell plasma membrane"/>
    <property type="evidence" value="ECO:0007669"/>
    <property type="project" value="UniProtKB-SubCell"/>
</dbReference>
<dbReference type="GO" id="GO:0016020">
    <property type="term" value="C:membrane"/>
    <property type="evidence" value="ECO:0007669"/>
    <property type="project" value="UniProtKB-UniRule"/>
</dbReference>
<dbReference type="GO" id="GO:0055036">
    <property type="term" value="C:virion membrane"/>
    <property type="evidence" value="ECO:0007669"/>
    <property type="project" value="UniProtKB-SubCell"/>
</dbReference>
<dbReference type="GO" id="GO:0004308">
    <property type="term" value="F:exo-alpha-sialidase activity"/>
    <property type="evidence" value="ECO:0007669"/>
    <property type="project" value="UniProtKB-UniRule"/>
</dbReference>
<dbReference type="GO" id="GO:0046872">
    <property type="term" value="F:metal ion binding"/>
    <property type="evidence" value="ECO:0007669"/>
    <property type="project" value="UniProtKB-UniRule"/>
</dbReference>
<dbReference type="GO" id="GO:0005975">
    <property type="term" value="P:carbohydrate metabolic process"/>
    <property type="evidence" value="ECO:0007669"/>
    <property type="project" value="InterPro"/>
</dbReference>
<dbReference type="GO" id="GO:0046761">
    <property type="term" value="P:viral budding from plasma membrane"/>
    <property type="evidence" value="ECO:0007669"/>
    <property type="project" value="UniProtKB-UniRule"/>
</dbReference>
<dbReference type="CDD" id="cd15483">
    <property type="entry name" value="Influenza_NA"/>
    <property type="match status" value="1"/>
</dbReference>
<dbReference type="Gene3D" id="2.120.10.10">
    <property type="match status" value="1"/>
</dbReference>
<dbReference type="HAMAP" id="MF_04071">
    <property type="entry name" value="INFV_NRAM"/>
    <property type="match status" value="1"/>
</dbReference>
<dbReference type="InterPro" id="IPR001860">
    <property type="entry name" value="Glyco_hydro_34"/>
</dbReference>
<dbReference type="InterPro" id="IPR033654">
    <property type="entry name" value="Sialidase_Influenza_A/B"/>
</dbReference>
<dbReference type="InterPro" id="IPR036278">
    <property type="entry name" value="Sialidase_sf"/>
</dbReference>
<dbReference type="Pfam" id="PF00064">
    <property type="entry name" value="Neur"/>
    <property type="match status" value="1"/>
</dbReference>
<dbReference type="SUPFAM" id="SSF50939">
    <property type="entry name" value="Sialidases"/>
    <property type="match status" value="1"/>
</dbReference>
<protein>
    <recommendedName>
        <fullName evidence="1">Neuraminidase</fullName>
        <ecNumber evidence="1">3.2.1.18</ecNumber>
    </recommendedName>
</protein>
<feature type="chain" id="PRO_5000142621" description="Neuraminidase">
    <location>
        <begin position="1"/>
        <end position="469"/>
    </location>
</feature>
<feature type="topological domain" description="Intravirion" evidence="1">
    <location>
        <begin position="1"/>
        <end position="6"/>
    </location>
</feature>
<feature type="transmembrane region" description="Helical" evidence="1">
    <location>
        <begin position="7"/>
        <end position="29"/>
    </location>
</feature>
<feature type="topological domain" description="Virion surface" evidence="1">
    <location>
        <begin position="30"/>
        <end position="469"/>
    </location>
</feature>
<feature type="region of interest" description="Involved in apical transport and lipid raft association" evidence="1">
    <location>
        <begin position="11"/>
        <end position="33"/>
    </location>
</feature>
<feature type="region of interest" description="Hypervariable stalk region" evidence="1">
    <location>
        <begin position="36"/>
        <end position="88"/>
    </location>
</feature>
<feature type="region of interest" description="Head of neuraminidase" evidence="1">
    <location>
        <begin position="91"/>
        <end position="469"/>
    </location>
</feature>
<feature type="region of interest" description="Disordered" evidence="2">
    <location>
        <begin position="325"/>
        <end position="349"/>
    </location>
</feature>
<feature type="active site" description="Proton donor/acceptor" evidence="1">
    <location>
        <position position="151"/>
    </location>
</feature>
<feature type="active site" description="Nucleophile" evidence="1">
    <location>
        <position position="406"/>
    </location>
</feature>
<feature type="binding site" evidence="1">
    <location>
        <position position="118"/>
    </location>
    <ligand>
        <name>substrate</name>
    </ligand>
</feature>
<feature type="binding site" evidence="1">
    <location>
        <position position="152"/>
    </location>
    <ligand>
        <name>substrate</name>
    </ligand>
</feature>
<feature type="binding site" evidence="1">
    <location>
        <begin position="276"/>
        <end position="277"/>
    </location>
    <ligand>
        <name>substrate</name>
    </ligand>
</feature>
<feature type="binding site" evidence="1">
    <location>
        <position position="292"/>
    </location>
    <ligand>
        <name>substrate</name>
    </ligand>
</feature>
<feature type="binding site" evidence="1">
    <location>
        <position position="293"/>
    </location>
    <ligand>
        <name>Ca(2+)</name>
        <dbReference type="ChEBI" id="CHEBI:29108"/>
    </ligand>
</feature>
<feature type="binding site" evidence="1">
    <location>
        <position position="297"/>
    </location>
    <ligand>
        <name>Ca(2+)</name>
        <dbReference type="ChEBI" id="CHEBI:29108"/>
    </ligand>
</feature>
<feature type="binding site" evidence="1">
    <location>
        <position position="324"/>
    </location>
    <ligand>
        <name>Ca(2+)</name>
        <dbReference type="ChEBI" id="CHEBI:29108"/>
    </ligand>
</feature>
<feature type="binding site" evidence="1">
    <location>
        <position position="371"/>
    </location>
    <ligand>
        <name>substrate</name>
    </ligand>
</feature>
<feature type="glycosylation site" description="N-linked (GlcNAc...) asparagine; by host" evidence="1">
    <location>
        <position position="61"/>
    </location>
</feature>
<feature type="glycosylation site" description="N-linked (GlcNAc...) asparagine; by host" evidence="1">
    <location>
        <position position="69"/>
    </location>
</feature>
<feature type="glycosylation site" description="N-linked (GlcNAc...) asparagine; by host" evidence="1">
    <location>
        <position position="70"/>
    </location>
</feature>
<feature type="glycosylation site" description="N-linked (GlcNAc...) asparagine; by host" evidence="1">
    <location>
        <position position="86"/>
    </location>
</feature>
<feature type="glycosylation site" description="N-linked (GlcNAc...) asparagine; by host" evidence="1">
    <location>
        <position position="146"/>
    </location>
</feature>
<feature type="glycosylation site" description="N-linked (GlcNAc...) asparagine; by host" evidence="1">
    <location>
        <position position="200"/>
    </location>
</feature>
<feature type="glycosylation site" description="N-linked (GlcNAc...) asparagine; by host" evidence="1">
    <location>
        <position position="234"/>
    </location>
</feature>
<feature type="glycosylation site" description="N-linked (GlcNAc...) asparagine; by host" evidence="1">
    <location>
        <position position="402"/>
    </location>
</feature>
<feature type="disulfide bond" evidence="1">
    <location>
        <begin position="92"/>
        <end position="417"/>
    </location>
</feature>
<feature type="disulfide bond" evidence="1">
    <location>
        <begin position="124"/>
        <end position="129"/>
    </location>
</feature>
<feature type="disulfide bond" evidence="1">
    <location>
        <begin position="183"/>
        <end position="230"/>
    </location>
</feature>
<feature type="disulfide bond" evidence="1">
    <location>
        <begin position="232"/>
        <end position="237"/>
    </location>
</feature>
<feature type="disulfide bond" evidence="1">
    <location>
        <begin position="278"/>
        <end position="291"/>
    </location>
</feature>
<feature type="disulfide bond" evidence="1">
    <location>
        <begin position="280"/>
        <end position="289"/>
    </location>
</feature>
<feature type="disulfide bond" evidence="1">
    <location>
        <begin position="318"/>
        <end position="337"/>
    </location>
</feature>
<feature type="disulfide bond" evidence="1">
    <location>
        <begin position="421"/>
        <end position="447"/>
    </location>
</feature>
<name>NRAM_I57A1</name>
<gene>
    <name evidence="1" type="primary">NA</name>
</gene>
<reference key="1">
    <citation type="journal article" date="1995" name="Virus Genes">
        <title>Nucleotide sequences of the neuraminidase genes of influenza A/Leningrad/134/57 (H2N2) virus and two of its live, attenuated, cold-adapted variants.</title>
        <authorList>
            <person name="Klimov A.I."/>
            <person name="Romanova J.R."/>
            <person name="Egorov A.Y."/>
            <person name="Lukashok I.V."/>
            <person name="Kiseleva I.V."/>
            <person name="Alexandrova G.I."/>
            <person name="Cox N.J."/>
        </authorList>
    </citation>
    <scope>NUCLEOTIDE SEQUENCE [GENOMIC RNA]</scope>
</reference>
<reference key="2">
    <citation type="journal article" date="2004" name="Virus Res.">
        <title>Assembly and budding of influenza virus.</title>
        <authorList>
            <person name="Nayak D.P."/>
            <person name="Hui E.K."/>
            <person name="Barman S."/>
        </authorList>
    </citation>
    <scope>REVIEW</scope>
</reference>
<reference key="3">
    <citation type="journal article" date="2005" name="N. Engl. J. Med.">
        <title>Neuraminidase inhibitors for influenza.</title>
        <authorList>
            <person name="Moscona A."/>
        </authorList>
    </citation>
    <scope>REVIEW</scope>
</reference>
<reference key="4">
    <citation type="journal article" date="2005" name="Biol. Pharm. Bull.">
        <title>Sialobiology of influenza: molecular mechanism of host range variation of influenza viruses.</title>
        <authorList>
            <person name="Suzuki Y."/>
        </authorList>
    </citation>
    <scope>REVIEW</scope>
</reference>